<dbReference type="EMBL" id="X04658">
    <property type="protein sequence ID" value="CAA28358.1"/>
    <property type="molecule type" value="Genomic_DNA"/>
</dbReference>
<dbReference type="PIR" id="S00852">
    <property type="entry name" value="S00852"/>
</dbReference>
<dbReference type="RefSeq" id="NP_612575.1">
    <property type="nucleotide sequence ID" value="NC_003498.1"/>
</dbReference>
<dbReference type="SMR" id="P05398"/>
<dbReference type="KEGG" id="vg:935424"/>
<dbReference type="OrthoDB" id="28061at10239"/>
<dbReference type="Proteomes" id="UP000008446">
    <property type="component" value="Segment"/>
</dbReference>
<dbReference type="GO" id="GO:0044219">
    <property type="term" value="C:host cell plasmodesma"/>
    <property type="evidence" value="ECO:0007669"/>
    <property type="project" value="UniProtKB-SubCell"/>
</dbReference>
<dbReference type="GO" id="GO:0044423">
    <property type="term" value="C:virion component"/>
    <property type="evidence" value="ECO:0007669"/>
    <property type="project" value="UniProtKB-KW"/>
</dbReference>
<dbReference type="GO" id="GO:0003677">
    <property type="term" value="F:DNA binding"/>
    <property type="evidence" value="ECO:0007669"/>
    <property type="project" value="InterPro"/>
</dbReference>
<dbReference type="Gene3D" id="6.10.250.630">
    <property type="match status" value="1"/>
</dbReference>
<dbReference type="InterPro" id="IPR004986">
    <property type="entry name" value="Caulimo_virion-assoc"/>
</dbReference>
<dbReference type="Pfam" id="PF03310">
    <property type="entry name" value="Cauli_DNA-bind"/>
    <property type="match status" value="1"/>
</dbReference>
<sequence length="128" mass="14232">MNLATIASEIEVVKTNQKTIESKIDQILAKIGSTPDESSNLESVAAKIISDLTKEMKECHCNKEIVEILNKDKAIIPSPEQDSIQKRLSEPQYTFPNFDVGNEGMGSSTNPNALKWPPTEKPQPWPPR</sequence>
<organism>
    <name type="scientific">Carnation etched ring virus</name>
    <name type="common">CERV</name>
    <dbReference type="NCBI Taxonomy" id="10640"/>
    <lineage>
        <taxon>Viruses</taxon>
        <taxon>Riboviria</taxon>
        <taxon>Pararnavirae</taxon>
        <taxon>Artverviricota</taxon>
        <taxon>Revtraviricetes</taxon>
        <taxon>Ortervirales</taxon>
        <taxon>Caulimoviridae</taxon>
        <taxon>Caulimovirus</taxon>
        <taxon>Caulimovirus incidianthi</taxon>
    </lineage>
</organism>
<keyword id="KW-0175">Coiled coil</keyword>
<keyword id="KW-1015">Disulfide bond</keyword>
<keyword id="KW-1031">Host cell junction</keyword>
<keyword id="KW-1185">Reference proteome</keyword>
<keyword id="KW-0946">Virion</keyword>
<name>VAP_CERV</name>
<feature type="chain" id="PRO_0000222081" description="Virion-associated protein">
    <location>
        <begin position="1"/>
        <end position="128"/>
    </location>
</feature>
<feature type="region of interest" description="Disordered" evidence="2">
    <location>
        <begin position="98"/>
        <end position="128"/>
    </location>
</feature>
<feature type="region of interest" description="Capsid binding" evidence="1">
    <location>
        <begin position="122"/>
        <end position="128"/>
    </location>
</feature>
<feature type="coiled-coil region" evidence="1">
    <location>
        <begin position="1"/>
        <end position="30"/>
    </location>
</feature>
<feature type="coiled-coil region" evidence="1">
    <location>
        <begin position="37"/>
        <end position="58"/>
    </location>
</feature>
<feature type="compositionally biased region" description="Pro residues" evidence="2">
    <location>
        <begin position="119"/>
        <end position="128"/>
    </location>
</feature>
<feature type="disulfide bond" description="Interchain (with C-61 in multimeric partner 1)" evidence="1">
    <location>
        <position position="59"/>
    </location>
</feature>
<feature type="disulfide bond" description="Interchain (with C-59 in multimeric partner 2)" evidence="1">
    <location>
        <position position="61"/>
    </location>
</feature>
<accession>P05398</accession>
<proteinExistence type="inferred from homology"/>
<reference key="1">
    <citation type="journal article" date="1986" name="EMBO J.">
        <title>The sequence of carnation etched ring virus DNA: comparison with cauliflower mosaic virus and retroviruses.</title>
        <authorList>
            <person name="Hull R."/>
            <person name="Sadler J."/>
            <person name="Longstaff M."/>
        </authorList>
    </citation>
    <scope>NUCLEOTIDE SEQUENCE [GENOMIC DNA]</scope>
</reference>
<evidence type="ECO:0000250" key="1"/>
<evidence type="ECO:0000256" key="2">
    <source>
        <dbReference type="SAM" id="MobiDB-lite"/>
    </source>
</evidence>
<evidence type="ECO:0000305" key="3"/>
<protein>
    <recommendedName>
        <fullName>Virion-associated protein</fullName>
        <shortName>Vap</shortName>
    </recommendedName>
    <alternativeName>
        <fullName>Protein 3</fullName>
        <shortName>P3</shortName>
    </alternativeName>
</protein>
<gene>
    <name type="ORF">ORF III</name>
</gene>
<comment type="function">
    <text evidence="1">Plays a role in virus cell-to-cell and plant-to-plant transmission. Interacts with virion icosahedral capsid and movement protein, thereby facilitating virion cell-to-cell transmission through plasmodesmata opened by viral movement protein. Also interacts with aphid transmission factor, attaching the virion to aphid stylet when the animal feeds on an virus infected plant. Aphid saliva may later detach the virion, inducing release of infectious particles when the animal feeds on a new plant (By similarity).</text>
</comment>
<comment type="subunit">
    <text evidence="1">Homotetramer, through coiled-coil domain. Homotrimer when interacts with icosehadral capsid. Interacts with capsid protein, and with Movement protein (By similarity).</text>
</comment>
<comment type="subcellular location">
    <subcellularLocation>
        <location evidence="1">Virion</location>
    </subcellularLocation>
    <subcellularLocation>
        <location>Host cell junction</location>
        <location>Host plasmodesma</location>
    </subcellularLocation>
</comment>
<comment type="similarity">
    <text evidence="3">Belongs to the caulimovirus ORF III family.</text>
</comment>
<organismHost>
    <name type="scientific">Dianthus caryophyllus</name>
    <name type="common">Carnation</name>
    <name type="synonym">Clove pink</name>
    <dbReference type="NCBI Taxonomy" id="3570"/>
</organismHost>